<protein>
    <recommendedName>
        <fullName evidence="1">2-succinyl-5-enolpyruvyl-6-hydroxy-3-cyclohexene-1-carboxylate synthase</fullName>
        <shortName evidence="1">SEPHCHC synthase</shortName>
        <ecNumber evidence="1">2.2.1.9</ecNumber>
    </recommendedName>
    <alternativeName>
        <fullName evidence="1">Menaquinone biosynthesis protein MenD</fullName>
    </alternativeName>
</protein>
<sequence>MTNPITHYIGSFIDEFALSGVTDAVVCPGSRSTPLAVLAAAHPDIQVHIQIDERSAGFFALGLAKARQRPVMLICTSGTAAANFYPAVIEAHYSRVPLIVLTADRPHELREVGAPQAINQHFLFGNFVKFFTDSALPEENPQMLSYIRTLAGRAVSEAGKRPMGPVHINVPLREPLMPDLSAAPFERMRKGRHVSVTTGIQSADQDSLCHITERLAGTERGMIVCGEIHGEAEKQQIIALAEMLQFPILADPLSNLRNGKHDKTLIIDAYDSFLKDEAIKEALRPDAVIRFGPMPVSKPLFLWLRDDPAIEQFIVDEDGGWRDPTQAGAHMIHCHPSVFLEAVRSAETGKRPSGWLEKWQFVNERFRSHLQAASMDDLSFEGNVYRQLQHLVPEGSSIFVGNSMPIRDVDTFFEKQDRSFRVYANRGANGIDGVVSSAMGLCEGTKAPVTLVIGDLSFYHDLNGLLAAKKLGIPLTVILINNDGGGIFSFLPQASDKTHFEELFGTPTGLDFRHAAALYGGTYTCPETWEAFKDAYQPQADKPGLHIIELKTDRTSRVQFHRDLLQAAVREVKKEWKL</sequence>
<keyword id="KW-0460">Magnesium</keyword>
<keyword id="KW-0464">Manganese</keyword>
<keyword id="KW-0474">Menaquinone biosynthesis</keyword>
<keyword id="KW-0479">Metal-binding</keyword>
<keyword id="KW-0786">Thiamine pyrophosphate</keyword>
<keyword id="KW-0808">Transferase</keyword>
<dbReference type="EC" id="2.2.1.9" evidence="1"/>
<dbReference type="EMBL" id="CP000560">
    <property type="protein sequence ID" value="ABS75138.1"/>
    <property type="molecule type" value="Genomic_DNA"/>
</dbReference>
<dbReference type="RefSeq" id="WP_012118268.1">
    <property type="nucleotide sequence ID" value="NC_009725.2"/>
</dbReference>
<dbReference type="SMR" id="A7Z812"/>
<dbReference type="GeneID" id="93081921"/>
<dbReference type="KEGG" id="bay:RBAM_027800"/>
<dbReference type="HOGENOM" id="CLU_006051_3_0_9"/>
<dbReference type="UniPathway" id="UPA00079"/>
<dbReference type="UniPathway" id="UPA01057">
    <property type="reaction ID" value="UER00164"/>
</dbReference>
<dbReference type="Proteomes" id="UP000001120">
    <property type="component" value="Chromosome"/>
</dbReference>
<dbReference type="GO" id="GO:0070204">
    <property type="term" value="F:2-succinyl-5-enolpyruvyl-6-hydroxy-3-cyclohexene-1-carboxylic-acid synthase activity"/>
    <property type="evidence" value="ECO:0007669"/>
    <property type="project" value="UniProtKB-UniRule"/>
</dbReference>
<dbReference type="GO" id="GO:0000287">
    <property type="term" value="F:magnesium ion binding"/>
    <property type="evidence" value="ECO:0007669"/>
    <property type="project" value="UniProtKB-UniRule"/>
</dbReference>
<dbReference type="GO" id="GO:0030145">
    <property type="term" value="F:manganese ion binding"/>
    <property type="evidence" value="ECO:0007669"/>
    <property type="project" value="UniProtKB-UniRule"/>
</dbReference>
<dbReference type="GO" id="GO:0030976">
    <property type="term" value="F:thiamine pyrophosphate binding"/>
    <property type="evidence" value="ECO:0007669"/>
    <property type="project" value="UniProtKB-UniRule"/>
</dbReference>
<dbReference type="GO" id="GO:0009234">
    <property type="term" value="P:menaquinone biosynthetic process"/>
    <property type="evidence" value="ECO:0007669"/>
    <property type="project" value="UniProtKB-UniRule"/>
</dbReference>
<dbReference type="CDD" id="cd07037">
    <property type="entry name" value="TPP_PYR_MenD"/>
    <property type="match status" value="1"/>
</dbReference>
<dbReference type="CDD" id="cd02009">
    <property type="entry name" value="TPP_SHCHC_synthase"/>
    <property type="match status" value="1"/>
</dbReference>
<dbReference type="Gene3D" id="3.40.50.970">
    <property type="match status" value="2"/>
</dbReference>
<dbReference type="Gene3D" id="3.40.50.1220">
    <property type="entry name" value="TPP-binding domain"/>
    <property type="match status" value="1"/>
</dbReference>
<dbReference type="HAMAP" id="MF_01659">
    <property type="entry name" value="MenD"/>
    <property type="match status" value="1"/>
</dbReference>
<dbReference type="InterPro" id="IPR029035">
    <property type="entry name" value="DHS-like_NAD/FAD-binding_dom"/>
</dbReference>
<dbReference type="InterPro" id="IPR004433">
    <property type="entry name" value="MenaQ_synth_MenD"/>
</dbReference>
<dbReference type="InterPro" id="IPR032264">
    <property type="entry name" value="MenD_middle"/>
</dbReference>
<dbReference type="InterPro" id="IPR029061">
    <property type="entry name" value="THDP-binding"/>
</dbReference>
<dbReference type="InterPro" id="IPR012001">
    <property type="entry name" value="Thiamin_PyroP_enz_TPP-bd_dom"/>
</dbReference>
<dbReference type="InterPro" id="IPR011766">
    <property type="entry name" value="TPP_enzyme_TPP-bd"/>
</dbReference>
<dbReference type="NCBIfam" id="TIGR00173">
    <property type="entry name" value="menD"/>
    <property type="match status" value="1"/>
</dbReference>
<dbReference type="PANTHER" id="PTHR42916">
    <property type="entry name" value="2-SUCCINYL-5-ENOLPYRUVYL-6-HYDROXY-3-CYCLOHEXENE-1-CARBOXYLATE SYNTHASE"/>
    <property type="match status" value="1"/>
</dbReference>
<dbReference type="PANTHER" id="PTHR42916:SF1">
    <property type="entry name" value="PROTEIN PHYLLO, CHLOROPLASTIC"/>
    <property type="match status" value="1"/>
</dbReference>
<dbReference type="Pfam" id="PF02775">
    <property type="entry name" value="TPP_enzyme_C"/>
    <property type="match status" value="1"/>
</dbReference>
<dbReference type="Pfam" id="PF16582">
    <property type="entry name" value="TPP_enzyme_M_2"/>
    <property type="match status" value="1"/>
</dbReference>
<dbReference type="Pfam" id="PF02776">
    <property type="entry name" value="TPP_enzyme_N"/>
    <property type="match status" value="1"/>
</dbReference>
<dbReference type="PIRSF" id="PIRSF004983">
    <property type="entry name" value="MenD"/>
    <property type="match status" value="1"/>
</dbReference>
<dbReference type="SUPFAM" id="SSF52467">
    <property type="entry name" value="DHS-like NAD/FAD-binding domain"/>
    <property type="match status" value="1"/>
</dbReference>
<dbReference type="SUPFAM" id="SSF52518">
    <property type="entry name" value="Thiamin diphosphate-binding fold (THDP-binding)"/>
    <property type="match status" value="2"/>
</dbReference>
<comment type="function">
    <text evidence="1">Catalyzes the thiamine diphosphate-dependent decarboxylation of 2-oxoglutarate and the subsequent addition of the resulting succinic semialdehyde-thiamine pyrophosphate anion to isochorismate to yield 2-succinyl-5-enolpyruvyl-6-hydroxy-3-cyclohexene-1-carboxylate (SEPHCHC).</text>
</comment>
<comment type="catalytic activity">
    <reaction evidence="1">
        <text>isochorismate + 2-oxoglutarate + H(+) = 5-enolpyruvoyl-6-hydroxy-2-succinyl-cyclohex-3-ene-1-carboxylate + CO2</text>
        <dbReference type="Rhea" id="RHEA:25593"/>
        <dbReference type="ChEBI" id="CHEBI:15378"/>
        <dbReference type="ChEBI" id="CHEBI:16526"/>
        <dbReference type="ChEBI" id="CHEBI:16810"/>
        <dbReference type="ChEBI" id="CHEBI:29780"/>
        <dbReference type="ChEBI" id="CHEBI:58818"/>
        <dbReference type="EC" id="2.2.1.9"/>
    </reaction>
</comment>
<comment type="cofactor">
    <cofactor evidence="1">
        <name>Mg(2+)</name>
        <dbReference type="ChEBI" id="CHEBI:18420"/>
    </cofactor>
    <cofactor evidence="1">
        <name>Mn(2+)</name>
        <dbReference type="ChEBI" id="CHEBI:29035"/>
    </cofactor>
</comment>
<comment type="cofactor">
    <cofactor evidence="1">
        <name>thiamine diphosphate</name>
        <dbReference type="ChEBI" id="CHEBI:58937"/>
    </cofactor>
    <text evidence="1">Binds 1 thiamine pyrophosphate per subunit.</text>
</comment>
<comment type="pathway">
    <text evidence="1">Quinol/quinone metabolism; 1,4-dihydroxy-2-naphthoate biosynthesis; 1,4-dihydroxy-2-naphthoate from chorismate: step 2/7.</text>
</comment>
<comment type="pathway">
    <text evidence="1">Quinol/quinone metabolism; menaquinone biosynthesis.</text>
</comment>
<comment type="subunit">
    <text evidence="1">Homodimer.</text>
</comment>
<comment type="similarity">
    <text evidence="1">Belongs to the TPP enzyme family. MenD subfamily.</text>
</comment>
<feature type="chain" id="PRO_0000341703" description="2-succinyl-5-enolpyruvyl-6-hydroxy-3-cyclohexene-1-carboxylate synthase">
    <location>
        <begin position="1"/>
        <end position="578"/>
    </location>
</feature>
<reference key="1">
    <citation type="journal article" date="2007" name="Nat. Biotechnol.">
        <title>Comparative analysis of the complete genome sequence of the plant growth-promoting bacterium Bacillus amyloliquefaciens FZB42.</title>
        <authorList>
            <person name="Chen X.H."/>
            <person name="Koumoutsi A."/>
            <person name="Scholz R."/>
            <person name="Eisenreich A."/>
            <person name="Schneider K."/>
            <person name="Heinemeyer I."/>
            <person name="Morgenstern B."/>
            <person name="Voss B."/>
            <person name="Hess W.R."/>
            <person name="Reva O."/>
            <person name="Junge H."/>
            <person name="Voigt B."/>
            <person name="Jungblut P.R."/>
            <person name="Vater J."/>
            <person name="Suessmuth R."/>
            <person name="Liesegang H."/>
            <person name="Strittmatter A."/>
            <person name="Gottschalk G."/>
            <person name="Borriss R."/>
        </authorList>
    </citation>
    <scope>NUCLEOTIDE SEQUENCE [LARGE SCALE GENOMIC DNA]</scope>
    <source>
        <strain>DSM 23117 / BGSC 10A6 / LMG 26770 / FZB42</strain>
    </source>
</reference>
<evidence type="ECO:0000255" key="1">
    <source>
        <dbReference type="HAMAP-Rule" id="MF_01659"/>
    </source>
</evidence>
<gene>
    <name evidence="1" type="primary">menD</name>
    <name type="ordered locus">RBAM_027800</name>
</gene>
<proteinExistence type="inferred from homology"/>
<accession>A7Z812</accession>
<name>MEND_BACVZ</name>
<organism>
    <name type="scientific">Bacillus velezensis (strain DSM 23117 / BGSC 10A6 / LMG 26770 / FZB42)</name>
    <name type="common">Bacillus amyloliquefaciens subsp. plantarum</name>
    <dbReference type="NCBI Taxonomy" id="326423"/>
    <lineage>
        <taxon>Bacteria</taxon>
        <taxon>Bacillati</taxon>
        <taxon>Bacillota</taxon>
        <taxon>Bacilli</taxon>
        <taxon>Bacillales</taxon>
        <taxon>Bacillaceae</taxon>
        <taxon>Bacillus</taxon>
        <taxon>Bacillus amyloliquefaciens group</taxon>
    </lineage>
</organism>